<sequence>MDQMSPDNINGVILAVSSSIFIGSSFIIKKKGLKKAGASGVRAGEGGYGYLKEPWWWAGMITMIVGEVANFAAYAFAPAILVTPLGALSIIFSAVLAHFILKEKLHMFGILGCILCVVGSTTIVLHAPHEQKIESVKQIWQLAIEPGFLVYSAVIVIVVAILIFYYEPRYGKTHMIVYVGICSLMGSLTVMSVKAVAIAIKLTFSGTNQFKYFNTWIFILVVATCCILQINYLNKALDTFNTAVISPVYYVMFTTFTIIASMIMFKDWASQSGLKIATELCGFVTILSGTFLLHKTKDMGNSASGRGSISMPTRDTPVFTNSGSGRSSSSDKVAS</sequence>
<evidence type="ECO:0000250" key="1"/>
<evidence type="ECO:0000255" key="2"/>
<evidence type="ECO:0000256" key="3">
    <source>
        <dbReference type="SAM" id="MobiDB-lite"/>
    </source>
</evidence>
<evidence type="ECO:0000305" key="4"/>
<dbReference type="EMBL" id="AP001297">
    <property type="protein sequence ID" value="BAB03004.1"/>
    <property type="molecule type" value="Genomic_DNA"/>
</dbReference>
<dbReference type="EMBL" id="CP002686">
    <property type="protein sequence ID" value="AEE76824.1"/>
    <property type="molecule type" value="Genomic_DNA"/>
</dbReference>
<dbReference type="EMBL" id="CP002686">
    <property type="protein sequence ID" value="ANM64589.1"/>
    <property type="molecule type" value="Genomic_DNA"/>
</dbReference>
<dbReference type="EMBL" id="CP002686">
    <property type="protein sequence ID" value="ANM64591.1"/>
    <property type="molecule type" value="Genomic_DNA"/>
</dbReference>
<dbReference type="EMBL" id="CP002686">
    <property type="protein sequence ID" value="ANM64592.1"/>
    <property type="molecule type" value="Genomic_DNA"/>
</dbReference>
<dbReference type="EMBL" id="BX824470">
    <property type="status" value="NOT_ANNOTATED_CDS"/>
    <property type="molecule type" value="mRNA"/>
</dbReference>
<dbReference type="RefSeq" id="NP_001326605.1">
    <property type="nucleotide sequence ID" value="NM_001338660.1"/>
</dbReference>
<dbReference type="RefSeq" id="NP_001326607.1">
    <property type="nucleotide sequence ID" value="NM_001338658.1"/>
</dbReference>
<dbReference type="RefSeq" id="NP_001326608.1">
    <property type="nucleotide sequence ID" value="NM_001338659.1"/>
</dbReference>
<dbReference type="RefSeq" id="NP_189029.1">
    <property type="nucleotide sequence ID" value="NM_113292.2"/>
</dbReference>
<dbReference type="BioGRID" id="7302">
    <property type="interactions" value="1"/>
</dbReference>
<dbReference type="FunCoup" id="Q9LIR9">
    <property type="interactions" value="3167"/>
</dbReference>
<dbReference type="IntAct" id="Q9LIR9">
    <property type="interactions" value="1"/>
</dbReference>
<dbReference type="STRING" id="3702.Q9LIR9"/>
<dbReference type="TCDB" id="2.A.7.25.5">
    <property type="family name" value="the drug/metabolite transporter (dmt) superfamily"/>
</dbReference>
<dbReference type="PaxDb" id="3702-AT3G23870.1"/>
<dbReference type="EnsemblPlants" id="AT3G23870.1">
    <property type="protein sequence ID" value="AT3G23870.1"/>
    <property type="gene ID" value="AT3G23870"/>
</dbReference>
<dbReference type="EnsemblPlants" id="AT3G23870.2">
    <property type="protein sequence ID" value="AT3G23870.2"/>
    <property type="gene ID" value="AT3G23870"/>
</dbReference>
<dbReference type="EnsemblPlants" id="AT3G23870.3">
    <property type="protein sequence ID" value="AT3G23870.3"/>
    <property type="gene ID" value="AT3G23870"/>
</dbReference>
<dbReference type="EnsemblPlants" id="AT3G23870.4">
    <property type="protein sequence ID" value="AT3G23870.4"/>
    <property type="gene ID" value="AT3G23870"/>
</dbReference>
<dbReference type="GeneID" id="821970"/>
<dbReference type="Gramene" id="AT3G23870.1">
    <property type="protein sequence ID" value="AT3G23870.1"/>
    <property type="gene ID" value="AT3G23870"/>
</dbReference>
<dbReference type="Gramene" id="AT3G23870.2">
    <property type="protein sequence ID" value="AT3G23870.2"/>
    <property type="gene ID" value="AT3G23870"/>
</dbReference>
<dbReference type="Gramene" id="AT3G23870.3">
    <property type="protein sequence ID" value="AT3G23870.3"/>
    <property type="gene ID" value="AT3G23870"/>
</dbReference>
<dbReference type="Gramene" id="AT3G23870.4">
    <property type="protein sequence ID" value="AT3G23870.4"/>
    <property type="gene ID" value="AT3G23870"/>
</dbReference>
<dbReference type="KEGG" id="ath:AT3G23870"/>
<dbReference type="Araport" id="AT3G23870"/>
<dbReference type="TAIR" id="AT3G23870">
    <property type="gene designation" value="ENOR3L2"/>
</dbReference>
<dbReference type="eggNOG" id="KOG2922">
    <property type="taxonomic scope" value="Eukaryota"/>
</dbReference>
<dbReference type="HOGENOM" id="CLU_012349_1_1_1"/>
<dbReference type="InParanoid" id="Q9LIR9"/>
<dbReference type="OMA" id="YGQTHMI"/>
<dbReference type="OrthoDB" id="6428174at2759"/>
<dbReference type="PhylomeDB" id="Q9LIR9"/>
<dbReference type="PRO" id="PR:Q9LIR9"/>
<dbReference type="Proteomes" id="UP000006548">
    <property type="component" value="Chromosome 3"/>
</dbReference>
<dbReference type="ExpressionAtlas" id="Q9LIR9">
    <property type="expression patterns" value="baseline and differential"/>
</dbReference>
<dbReference type="GO" id="GO:0005769">
    <property type="term" value="C:early endosome"/>
    <property type="evidence" value="ECO:0000250"/>
    <property type="project" value="UniProtKB"/>
</dbReference>
<dbReference type="GO" id="GO:0005886">
    <property type="term" value="C:plasma membrane"/>
    <property type="evidence" value="ECO:0000250"/>
    <property type="project" value="UniProtKB"/>
</dbReference>
<dbReference type="GO" id="GO:0015095">
    <property type="term" value="F:magnesium ion transmembrane transporter activity"/>
    <property type="evidence" value="ECO:0007669"/>
    <property type="project" value="InterPro"/>
</dbReference>
<dbReference type="GO" id="GO:0015693">
    <property type="term" value="P:magnesium ion transport"/>
    <property type="evidence" value="ECO:0000250"/>
    <property type="project" value="UniProtKB"/>
</dbReference>
<dbReference type="InterPro" id="IPR008521">
    <property type="entry name" value="Mg_trans_NIPA"/>
</dbReference>
<dbReference type="PANTHER" id="PTHR12570">
    <property type="match status" value="1"/>
</dbReference>
<dbReference type="PANTHER" id="PTHR12570:SF20">
    <property type="entry name" value="MAGNESIUM TRANSPORTER NIPA1-RELATED"/>
    <property type="match status" value="1"/>
</dbReference>
<dbReference type="Pfam" id="PF05653">
    <property type="entry name" value="Mg_trans_NIPA"/>
    <property type="match status" value="1"/>
</dbReference>
<dbReference type="SUPFAM" id="SSF103481">
    <property type="entry name" value="Multidrug resistance efflux transporter EmrE"/>
    <property type="match status" value="1"/>
</dbReference>
<proteinExistence type="evidence at transcript level"/>
<protein>
    <recommendedName>
        <fullName>Probable magnesium transporter NIPA1</fullName>
    </recommendedName>
</protein>
<feature type="chain" id="PRO_0000430289" description="Probable magnesium transporter NIPA1">
    <location>
        <begin position="1"/>
        <end position="335"/>
    </location>
</feature>
<feature type="topological domain" description="Extracellular" evidence="2">
    <location>
        <begin position="1"/>
        <end position="7"/>
    </location>
</feature>
<feature type="transmembrane region" description="Helical; Name=1" evidence="2">
    <location>
        <begin position="8"/>
        <end position="28"/>
    </location>
</feature>
<feature type="topological domain" description="Cytoplasmic" evidence="2">
    <location>
        <begin position="29"/>
        <end position="55"/>
    </location>
</feature>
<feature type="transmembrane region" description="Helical; Name=2" evidence="2">
    <location>
        <begin position="56"/>
        <end position="76"/>
    </location>
</feature>
<feature type="topological domain" description="Extracellular" evidence="2">
    <location>
        <begin position="77"/>
        <end position="79"/>
    </location>
</feature>
<feature type="transmembrane region" description="Helical; Name=3" evidence="2">
    <location>
        <begin position="80"/>
        <end position="100"/>
    </location>
</feature>
<feature type="topological domain" description="Cytoplasmic" evidence="2">
    <location>
        <begin position="101"/>
        <end position="104"/>
    </location>
</feature>
<feature type="transmembrane region" description="Helical; Name=4" evidence="2">
    <location>
        <begin position="105"/>
        <end position="125"/>
    </location>
</feature>
<feature type="topological domain" description="Extracellular" evidence="2">
    <location>
        <begin position="126"/>
        <end position="143"/>
    </location>
</feature>
<feature type="transmembrane region" description="Helical; Name=5" evidence="2">
    <location>
        <begin position="144"/>
        <end position="164"/>
    </location>
</feature>
<feature type="topological domain" description="Cytoplasmic" evidence="2">
    <location>
        <begin position="165"/>
        <end position="179"/>
    </location>
</feature>
<feature type="transmembrane region" description="Helical; Name=6" evidence="2">
    <location>
        <begin position="180"/>
        <end position="200"/>
    </location>
</feature>
<feature type="topological domain" description="Extracellular" evidence="2">
    <location>
        <begin position="201"/>
        <end position="212"/>
    </location>
</feature>
<feature type="transmembrane region" description="Helical; Name=7" evidence="2">
    <location>
        <begin position="213"/>
        <end position="233"/>
    </location>
</feature>
<feature type="topological domain" description="Cytoplasmic" evidence="2">
    <location>
        <begin position="234"/>
        <end position="244"/>
    </location>
</feature>
<feature type="transmembrane region" description="Helical; Name=8" evidence="2">
    <location>
        <begin position="245"/>
        <end position="265"/>
    </location>
</feature>
<feature type="topological domain" description="Extracellular" evidence="2">
    <location>
        <begin position="266"/>
        <end position="272"/>
    </location>
</feature>
<feature type="transmembrane region" description="Helical; Name=9" evidence="2">
    <location>
        <begin position="273"/>
        <end position="293"/>
    </location>
</feature>
<feature type="topological domain" description="Cytoplasmic" evidence="2">
    <location>
        <begin position="294"/>
        <end position="335"/>
    </location>
</feature>
<feature type="region of interest" description="Disordered" evidence="3">
    <location>
        <begin position="303"/>
        <end position="335"/>
    </location>
</feature>
<feature type="compositionally biased region" description="Polar residues" evidence="3">
    <location>
        <begin position="303"/>
        <end position="321"/>
    </location>
</feature>
<feature type="compositionally biased region" description="Low complexity" evidence="3">
    <location>
        <begin position="322"/>
        <end position="335"/>
    </location>
</feature>
<feature type="sequence conflict" description="In Ref. 3; BX824470." evidence="4" ref="3">
    <original>D</original>
    <variation>E</variation>
    <location>
        <position position="315"/>
    </location>
</feature>
<comment type="function">
    <text evidence="1">Acts as a Mg(2+) transporter. Can also transport other divalent cations such as Fe(2+), Sr(2+), Ba(2+), Mn(2+) and Co(2+) but to a much less extent than Mg(2+) (By similarity).</text>
</comment>
<comment type="subunit">
    <text evidence="1">Homodimer.</text>
</comment>
<comment type="subcellular location">
    <subcellularLocation>
        <location evidence="1">Cell membrane</location>
        <topology evidence="1">Multi-pass membrane protein</topology>
    </subcellularLocation>
    <subcellularLocation>
        <location evidence="1">Early endosome</location>
    </subcellularLocation>
    <text evidence="1">Recruited to the cell membrane in response to low extracellular magnesium.</text>
</comment>
<comment type="similarity">
    <text evidence="4">Belongs to the NIPA (TC 2.A.7) family.</text>
</comment>
<comment type="sequence caution" evidence="4">
    <conflict type="erroneous termination">
        <sequence resource="EMBL" id="BX824470"/>
    </conflict>
    <text>Truncated C-terminus.</text>
</comment>
<name>NIPA1_ARATH</name>
<keyword id="KW-1003">Cell membrane</keyword>
<keyword id="KW-0967">Endosome</keyword>
<keyword id="KW-0406">Ion transport</keyword>
<keyword id="KW-0460">Magnesium</keyword>
<keyword id="KW-0472">Membrane</keyword>
<keyword id="KW-1185">Reference proteome</keyword>
<keyword id="KW-0812">Transmembrane</keyword>
<keyword id="KW-1133">Transmembrane helix</keyword>
<keyword id="KW-0813">Transport</keyword>
<organism>
    <name type="scientific">Arabidopsis thaliana</name>
    <name type="common">Mouse-ear cress</name>
    <dbReference type="NCBI Taxonomy" id="3702"/>
    <lineage>
        <taxon>Eukaryota</taxon>
        <taxon>Viridiplantae</taxon>
        <taxon>Streptophyta</taxon>
        <taxon>Embryophyta</taxon>
        <taxon>Tracheophyta</taxon>
        <taxon>Spermatophyta</taxon>
        <taxon>Magnoliopsida</taxon>
        <taxon>eudicotyledons</taxon>
        <taxon>Gunneridae</taxon>
        <taxon>Pentapetalae</taxon>
        <taxon>rosids</taxon>
        <taxon>malvids</taxon>
        <taxon>Brassicales</taxon>
        <taxon>Brassicaceae</taxon>
        <taxon>Camelineae</taxon>
        <taxon>Arabidopsis</taxon>
    </lineage>
</organism>
<gene>
    <name type="ordered locus">At3g23870</name>
    <name type="ORF">F14O13.5</name>
</gene>
<accession>Q9LIR9</accession>
<reference key="1">
    <citation type="journal article" date="2000" name="DNA Res.">
        <title>Structural analysis of Arabidopsis thaliana chromosome 3. II. Sequence features of the 4,251,695 bp regions covered by 90 P1, TAC and BAC clones.</title>
        <authorList>
            <person name="Kaneko T."/>
            <person name="Katoh T."/>
            <person name="Sato S."/>
            <person name="Nakamura Y."/>
            <person name="Asamizu E."/>
            <person name="Tabata S."/>
        </authorList>
    </citation>
    <scope>NUCLEOTIDE SEQUENCE [LARGE SCALE GENOMIC DNA]</scope>
    <source>
        <strain>cv. Columbia</strain>
    </source>
</reference>
<reference key="2">
    <citation type="journal article" date="2017" name="Plant J.">
        <title>Araport11: a complete reannotation of the Arabidopsis thaliana reference genome.</title>
        <authorList>
            <person name="Cheng C.Y."/>
            <person name="Krishnakumar V."/>
            <person name="Chan A.P."/>
            <person name="Thibaud-Nissen F."/>
            <person name="Schobel S."/>
            <person name="Town C.D."/>
        </authorList>
    </citation>
    <scope>GENOME REANNOTATION</scope>
    <source>
        <strain>cv. Columbia</strain>
    </source>
</reference>
<reference key="3">
    <citation type="journal article" date="2004" name="Genome Res.">
        <title>Whole genome sequence comparisons and 'full-length' cDNA sequences: a combined approach to evaluate and improve Arabidopsis genome annotation.</title>
        <authorList>
            <person name="Castelli V."/>
            <person name="Aury J.-M."/>
            <person name="Jaillon O."/>
            <person name="Wincker P."/>
            <person name="Clepet C."/>
            <person name="Menard M."/>
            <person name="Cruaud C."/>
            <person name="Quetier F."/>
            <person name="Scarpelli C."/>
            <person name="Schaechter V."/>
            <person name="Temple G."/>
            <person name="Caboche M."/>
            <person name="Weissenbach J."/>
            <person name="Salanoubat M."/>
        </authorList>
    </citation>
    <scope>NUCLEOTIDE SEQUENCE [LARGE SCALE MRNA]</scope>
    <source>
        <strain>cv. Columbia</strain>
    </source>
</reference>